<name>SEC14_YARLI</name>
<gene>
    <name type="primary">SEC14</name>
    <name type="ordered locus">YALI0D04488g</name>
</gene>
<sequence length="492" mass="52607">MTVTEQEFLASYPQKVAPGGPTGYPGNLTAEQEQKLGELKMILLTKGYEDRTDDATLLRFLRARKFDVPLAQEMWENCEKWRKEFGTNTILEDFWYKEKKEVAKLYPQYYHKTDKDGRPVYVENVGKVNIHEMYKITTQERMLRNLVWEYESFVRHRLPACSRVVGHLIETSCTILDLKGVSLSSASQVYGFLKDASNIGQNYYPERMGKFYLINAPFGFSTVFSVIKRFLDPVTVSKIHVYGSNYKEKLLAQVPAYNLPIKFGGQSSSKIGVELSDDGPWRDPQFVGPEGLAPVAGERPTGAPSIVSNSSTYAKSTASTKVGADDKATDAKANGNGAAAAAAGAGTAAAGGAAAAAGASSSKQAAPAQAAPAQAAKAPVPAAAKTATAPAPTGKTAAPQTNSFPPEMLAMMEQNEKKAEKAAEAKTKGGAAPQANAFTDEQLAQLNSLPQQVATGGVSQPLPDSHVTQGVPTVAKIAEAAAGPHEDAHLPH</sequence>
<comment type="function">
    <text>Required for transport of secretory proteins from the Golgi complex. Catalyzes the transfer of phosphatidylinositol and phosphatidylcholine between membranes in vitro.</text>
</comment>
<comment type="subcellular location">
    <subcellularLocation>
        <location evidence="1">Golgi apparatus membrane</location>
        <topology evidence="1">Peripheral membrane protein</topology>
    </subcellularLocation>
</comment>
<comment type="sequence caution" evidence="4">
    <conflict type="frameshift">
        <sequence resource="EMBL-CDS" id="AAA35249"/>
    </conflict>
</comment>
<protein>
    <recommendedName>
        <fullName>SEC14 cytosolic factor</fullName>
    </recommendedName>
    <alternativeName>
        <fullName>Phosphatidylinositol/phosphatidylcholine transfer protein</fullName>
        <shortName>PI/PC TP</shortName>
    </alternativeName>
</protein>
<accession>P45816</accession>
<accession>Q6CAA5</accession>
<organism>
    <name type="scientific">Yarrowia lipolytica (strain CLIB 122 / E 150)</name>
    <name type="common">Yeast</name>
    <name type="synonym">Candida lipolytica</name>
    <dbReference type="NCBI Taxonomy" id="284591"/>
    <lineage>
        <taxon>Eukaryota</taxon>
        <taxon>Fungi</taxon>
        <taxon>Dikarya</taxon>
        <taxon>Ascomycota</taxon>
        <taxon>Saccharomycotina</taxon>
        <taxon>Dipodascomycetes</taxon>
        <taxon>Dipodascales</taxon>
        <taxon>Dipodascales incertae sedis</taxon>
        <taxon>Yarrowia</taxon>
    </lineage>
</organism>
<reference key="1">
    <citation type="journal article" date="1994" name="J. Cell Biol.">
        <title>A phosphatidylinositol/phosphatidylcholine transfer protein is required for differentiation of the dimorphic yeast Yarrowia lipolytica from the yeast to the mycelial form.</title>
        <authorList>
            <person name="Lopez M.C."/>
            <person name="Nicaud J.-M."/>
            <person name="Skinner H.B."/>
            <person name="Vergnolle C."/>
            <person name="Kader J.-C."/>
            <person name="Bankaitis V."/>
            <person name="Gaillardin C."/>
        </authorList>
    </citation>
    <scope>NUCLEOTIDE SEQUENCE [GENOMIC DNA]</scope>
    <source>
        <strain>ATCC 20460 / W29 / CBS 7504 / IFP29</strain>
    </source>
</reference>
<reference key="2">
    <citation type="journal article" date="2004" name="Nature">
        <title>Genome evolution in yeasts.</title>
        <authorList>
            <person name="Dujon B."/>
            <person name="Sherman D."/>
            <person name="Fischer G."/>
            <person name="Durrens P."/>
            <person name="Casaregola S."/>
            <person name="Lafontaine I."/>
            <person name="de Montigny J."/>
            <person name="Marck C."/>
            <person name="Neuveglise C."/>
            <person name="Talla E."/>
            <person name="Goffard N."/>
            <person name="Frangeul L."/>
            <person name="Aigle M."/>
            <person name="Anthouard V."/>
            <person name="Babour A."/>
            <person name="Barbe V."/>
            <person name="Barnay S."/>
            <person name="Blanchin S."/>
            <person name="Beckerich J.-M."/>
            <person name="Beyne E."/>
            <person name="Bleykasten C."/>
            <person name="Boisrame A."/>
            <person name="Boyer J."/>
            <person name="Cattolico L."/>
            <person name="Confanioleri F."/>
            <person name="de Daruvar A."/>
            <person name="Despons L."/>
            <person name="Fabre E."/>
            <person name="Fairhead C."/>
            <person name="Ferry-Dumazet H."/>
            <person name="Groppi A."/>
            <person name="Hantraye F."/>
            <person name="Hennequin C."/>
            <person name="Jauniaux N."/>
            <person name="Joyet P."/>
            <person name="Kachouri R."/>
            <person name="Kerrest A."/>
            <person name="Koszul R."/>
            <person name="Lemaire M."/>
            <person name="Lesur I."/>
            <person name="Ma L."/>
            <person name="Muller H."/>
            <person name="Nicaud J.-M."/>
            <person name="Nikolski M."/>
            <person name="Oztas S."/>
            <person name="Ozier-Kalogeropoulos O."/>
            <person name="Pellenz S."/>
            <person name="Potier S."/>
            <person name="Richard G.-F."/>
            <person name="Straub M.-L."/>
            <person name="Suleau A."/>
            <person name="Swennen D."/>
            <person name="Tekaia F."/>
            <person name="Wesolowski-Louvel M."/>
            <person name="Westhof E."/>
            <person name="Wirth B."/>
            <person name="Zeniou-Meyer M."/>
            <person name="Zivanovic Y."/>
            <person name="Bolotin-Fukuhara M."/>
            <person name="Thierry A."/>
            <person name="Bouchier C."/>
            <person name="Caudron B."/>
            <person name="Scarpelli C."/>
            <person name="Gaillardin C."/>
            <person name="Weissenbach J."/>
            <person name="Wincker P."/>
            <person name="Souciet J.-L."/>
        </authorList>
    </citation>
    <scope>NUCLEOTIDE SEQUENCE [LARGE SCALE GENOMIC DNA]</scope>
    <source>
        <strain>CLIB 122 / E 150</strain>
    </source>
</reference>
<dbReference type="EMBL" id="L20972">
    <property type="protein sequence ID" value="AAA35249.1"/>
    <property type="status" value="ALT_FRAME"/>
    <property type="molecule type" value="Genomic_DNA"/>
</dbReference>
<dbReference type="EMBL" id="CR382130">
    <property type="protein sequence ID" value="CAG80595.1"/>
    <property type="molecule type" value="Genomic_DNA"/>
</dbReference>
<dbReference type="PIR" id="S43745">
    <property type="entry name" value="S43745"/>
</dbReference>
<dbReference type="RefSeq" id="XP_502407.1">
    <property type="nucleotide sequence ID" value="XM_502407.1"/>
</dbReference>
<dbReference type="SMR" id="P45816"/>
<dbReference type="FunCoup" id="P45816">
    <property type="interactions" value="316"/>
</dbReference>
<dbReference type="STRING" id="284591.P45816"/>
<dbReference type="EnsemblFungi" id="CAG80595">
    <property type="protein sequence ID" value="CAG80595"/>
    <property type="gene ID" value="YALI0_D04488g"/>
</dbReference>
<dbReference type="KEGG" id="yli:2910641"/>
<dbReference type="VEuPathDB" id="FungiDB:YALI0_D04488g"/>
<dbReference type="HOGENOM" id="CLU_014001_0_1_1"/>
<dbReference type="InParanoid" id="P45816"/>
<dbReference type="OMA" id="ASRHATH"/>
<dbReference type="OrthoDB" id="119279at4891"/>
<dbReference type="Proteomes" id="UP000001300">
    <property type="component" value="Chromosome D"/>
</dbReference>
<dbReference type="GO" id="GO:0000139">
    <property type="term" value="C:Golgi membrane"/>
    <property type="evidence" value="ECO:0007669"/>
    <property type="project" value="UniProtKB-SubCell"/>
</dbReference>
<dbReference type="GO" id="GO:0008526">
    <property type="term" value="F:phosphatidylinositol transfer activity"/>
    <property type="evidence" value="ECO:0000318"/>
    <property type="project" value="GO_Central"/>
</dbReference>
<dbReference type="GO" id="GO:0006892">
    <property type="term" value="P:post-Golgi vesicle-mediated transport"/>
    <property type="evidence" value="ECO:0000318"/>
    <property type="project" value="GO_Central"/>
</dbReference>
<dbReference type="GO" id="GO:0015031">
    <property type="term" value="P:protein transport"/>
    <property type="evidence" value="ECO:0007669"/>
    <property type="project" value="UniProtKB-KW"/>
</dbReference>
<dbReference type="CDD" id="cd00170">
    <property type="entry name" value="SEC14"/>
    <property type="match status" value="1"/>
</dbReference>
<dbReference type="Gene3D" id="3.40.525.10">
    <property type="entry name" value="CRAL-TRIO lipid binding domain"/>
    <property type="match status" value="1"/>
</dbReference>
<dbReference type="Gene3D" id="1.10.8.20">
    <property type="entry name" value="N-terminal domain of phosphatidylinositol transfer protein sec14p"/>
    <property type="match status" value="1"/>
</dbReference>
<dbReference type="InterPro" id="IPR001251">
    <property type="entry name" value="CRAL-TRIO_dom"/>
</dbReference>
<dbReference type="InterPro" id="IPR036865">
    <property type="entry name" value="CRAL-TRIO_dom_sf"/>
</dbReference>
<dbReference type="InterPro" id="IPR011074">
    <property type="entry name" value="CRAL/TRIO_N_dom"/>
</dbReference>
<dbReference type="InterPro" id="IPR036273">
    <property type="entry name" value="CRAL/TRIO_N_dom_sf"/>
</dbReference>
<dbReference type="InterPro" id="IPR051026">
    <property type="entry name" value="PI/PC_transfer"/>
</dbReference>
<dbReference type="PANTHER" id="PTHR45657">
    <property type="entry name" value="CRAL-TRIO DOMAIN-CONTAINING PROTEIN YKL091C-RELATED"/>
    <property type="match status" value="1"/>
</dbReference>
<dbReference type="PANTHER" id="PTHR45657:SF1">
    <property type="entry name" value="CRAL-TRIO DOMAIN-CONTAINING PROTEIN YKL091C-RELATED"/>
    <property type="match status" value="1"/>
</dbReference>
<dbReference type="Pfam" id="PF00650">
    <property type="entry name" value="CRAL_TRIO"/>
    <property type="match status" value="1"/>
</dbReference>
<dbReference type="Pfam" id="PF03765">
    <property type="entry name" value="CRAL_TRIO_N"/>
    <property type="match status" value="1"/>
</dbReference>
<dbReference type="PRINTS" id="PR00180">
    <property type="entry name" value="CRETINALDHBP"/>
</dbReference>
<dbReference type="SMART" id="SM01100">
    <property type="entry name" value="CRAL_TRIO_N"/>
    <property type="match status" value="1"/>
</dbReference>
<dbReference type="SMART" id="SM00516">
    <property type="entry name" value="SEC14"/>
    <property type="match status" value="1"/>
</dbReference>
<dbReference type="SUPFAM" id="SSF52087">
    <property type="entry name" value="CRAL/TRIO domain"/>
    <property type="match status" value="1"/>
</dbReference>
<dbReference type="SUPFAM" id="SSF46938">
    <property type="entry name" value="CRAL/TRIO N-terminal domain"/>
    <property type="match status" value="1"/>
</dbReference>
<dbReference type="PROSITE" id="PS50191">
    <property type="entry name" value="CRAL_TRIO"/>
    <property type="match status" value="1"/>
</dbReference>
<keyword id="KW-0333">Golgi apparatus</keyword>
<keyword id="KW-0472">Membrane</keyword>
<keyword id="KW-0653">Protein transport</keyword>
<keyword id="KW-1185">Reference proteome</keyword>
<keyword id="KW-0813">Transport</keyword>
<feature type="chain" id="PRO_0000210743" description="SEC14 cytosolic factor">
    <location>
        <begin position="1"/>
        <end position="492"/>
    </location>
</feature>
<feature type="domain" description="CRAL-TRIO" evidence="2">
    <location>
        <begin position="98"/>
        <end position="271"/>
    </location>
</feature>
<feature type="region of interest" description="Disordered" evidence="3">
    <location>
        <begin position="274"/>
        <end position="310"/>
    </location>
</feature>
<feature type="region of interest" description="Disordered" evidence="3">
    <location>
        <begin position="377"/>
        <end position="403"/>
    </location>
</feature>
<feature type="region of interest" description="Disordered" evidence="3">
    <location>
        <begin position="454"/>
        <end position="492"/>
    </location>
</feature>
<feature type="compositionally biased region" description="Low complexity" evidence="3">
    <location>
        <begin position="377"/>
        <end position="398"/>
    </location>
</feature>
<evidence type="ECO:0000250" key="1"/>
<evidence type="ECO:0000255" key="2">
    <source>
        <dbReference type="PROSITE-ProRule" id="PRU00056"/>
    </source>
</evidence>
<evidence type="ECO:0000256" key="3">
    <source>
        <dbReference type="SAM" id="MobiDB-lite"/>
    </source>
</evidence>
<evidence type="ECO:0000305" key="4"/>
<proteinExistence type="inferred from homology"/>